<comment type="function">
    <text evidence="1">Involved in acetate metabolism.</text>
</comment>
<comment type="catalytic activity">
    <reaction>
        <text>acetyl-CoA + phosphate = acetyl phosphate + CoA</text>
        <dbReference type="Rhea" id="RHEA:19521"/>
        <dbReference type="ChEBI" id="CHEBI:22191"/>
        <dbReference type="ChEBI" id="CHEBI:43474"/>
        <dbReference type="ChEBI" id="CHEBI:57287"/>
        <dbReference type="ChEBI" id="CHEBI:57288"/>
        <dbReference type="EC" id="2.3.1.8"/>
    </reaction>
</comment>
<comment type="pathway">
    <text>Metabolic intermediate biosynthesis; acetyl-CoA biosynthesis; acetyl-CoA from acetate: step 2/2.</text>
</comment>
<comment type="subunit">
    <text evidence="1">Homohexamer.</text>
</comment>
<comment type="subcellular location">
    <subcellularLocation>
        <location evidence="2">Cytoplasm</location>
    </subcellularLocation>
</comment>
<comment type="domain">
    <text evidence="1">The N-terminal region seems to be important for proper quaternary structure. The C-terminal region contains the substrate-binding site (By similarity).</text>
</comment>
<comment type="similarity">
    <text evidence="2">In the N-terminal section; belongs to the CobB/CobQ family.</text>
</comment>
<comment type="similarity">
    <text evidence="2">In the C-terminal section; belongs to the phosphate acetyltransferase and butyryltransferase family.</text>
</comment>
<reference key="1">
    <citation type="journal article" date="2004" name="Nat. Biotechnol.">
        <title>The genome sequence of the anaerobic, sulfate-reducing bacterium Desulfovibrio vulgaris Hildenborough.</title>
        <authorList>
            <person name="Heidelberg J.F."/>
            <person name="Seshadri R."/>
            <person name="Haveman S.A."/>
            <person name="Hemme C.L."/>
            <person name="Paulsen I.T."/>
            <person name="Kolonay J.F."/>
            <person name="Eisen J.A."/>
            <person name="Ward N.L."/>
            <person name="Methe B.A."/>
            <person name="Brinkac L.M."/>
            <person name="Daugherty S.C."/>
            <person name="DeBoy R.T."/>
            <person name="Dodson R.J."/>
            <person name="Durkin A.S."/>
            <person name="Madupu R."/>
            <person name="Nelson W.C."/>
            <person name="Sullivan S.A."/>
            <person name="Fouts D.E."/>
            <person name="Haft D.H."/>
            <person name="Selengut J."/>
            <person name="Peterson J.D."/>
            <person name="Davidsen T.M."/>
            <person name="Zafar N."/>
            <person name="Zhou L."/>
            <person name="Radune D."/>
            <person name="Dimitrov G."/>
            <person name="Hance M."/>
            <person name="Tran K."/>
            <person name="Khouri H.M."/>
            <person name="Gill J."/>
            <person name="Utterback T.R."/>
            <person name="Feldblyum T.V."/>
            <person name="Wall J.D."/>
            <person name="Voordouw G."/>
            <person name="Fraser C.M."/>
        </authorList>
    </citation>
    <scope>NUCLEOTIDE SEQUENCE [LARGE SCALE GENOMIC DNA]</scope>
    <source>
        <strain>ATCC 29579 / DSM 644 / CCUG 34227 / NCIMB 8303 / VKM B-1760 / Hildenborough</strain>
    </source>
</reference>
<feature type="chain" id="PRO_0000405547" description="Phosphate acetyltransferase">
    <location>
        <begin position="1"/>
        <end position="704"/>
    </location>
</feature>
<feature type="region of interest" description="Phosphate acetyltransferase">
    <location>
        <begin position="380"/>
        <end position="704"/>
    </location>
</feature>
<dbReference type="EC" id="2.3.1.8"/>
<dbReference type="EMBL" id="AE017285">
    <property type="protein sequence ID" value="AAS97500.1"/>
    <property type="molecule type" value="Genomic_DNA"/>
</dbReference>
<dbReference type="RefSeq" id="WP_010940288.1">
    <property type="nucleotide sequence ID" value="NC_002937.3"/>
</dbReference>
<dbReference type="RefSeq" id="YP_012240.1">
    <property type="nucleotide sequence ID" value="NC_002937.3"/>
</dbReference>
<dbReference type="SMR" id="Q726S7"/>
<dbReference type="IntAct" id="Q726S7">
    <property type="interactions" value="3"/>
</dbReference>
<dbReference type="STRING" id="882.DVU_3029"/>
<dbReference type="PaxDb" id="882-DVU_3029"/>
<dbReference type="EnsemblBacteria" id="AAS97500">
    <property type="protein sequence ID" value="AAS97500"/>
    <property type="gene ID" value="DVU_3029"/>
</dbReference>
<dbReference type="KEGG" id="dvu:DVU_3029"/>
<dbReference type="PATRIC" id="fig|882.5.peg.2747"/>
<dbReference type="eggNOG" id="COG0280">
    <property type="taxonomic scope" value="Bacteria"/>
</dbReference>
<dbReference type="eggNOG" id="COG0857">
    <property type="taxonomic scope" value="Bacteria"/>
</dbReference>
<dbReference type="HOGENOM" id="CLU_019723_3_0_7"/>
<dbReference type="OrthoDB" id="9808984at2"/>
<dbReference type="PhylomeDB" id="Q726S7"/>
<dbReference type="UniPathway" id="UPA00340">
    <property type="reaction ID" value="UER00459"/>
</dbReference>
<dbReference type="Proteomes" id="UP000002194">
    <property type="component" value="Chromosome"/>
</dbReference>
<dbReference type="GO" id="GO:0005737">
    <property type="term" value="C:cytoplasm"/>
    <property type="evidence" value="ECO:0007669"/>
    <property type="project" value="UniProtKB-SubCell"/>
</dbReference>
<dbReference type="GO" id="GO:0008959">
    <property type="term" value="F:phosphate acetyltransferase activity"/>
    <property type="evidence" value="ECO:0007669"/>
    <property type="project" value="UniProtKB-EC"/>
</dbReference>
<dbReference type="GO" id="GO:0006085">
    <property type="term" value="P:acetyl-CoA biosynthetic process"/>
    <property type="evidence" value="ECO:0007669"/>
    <property type="project" value="UniProtKB-UniPathway"/>
</dbReference>
<dbReference type="CDD" id="cd03109">
    <property type="entry name" value="DTBS"/>
    <property type="match status" value="1"/>
</dbReference>
<dbReference type="FunFam" id="3.40.50.10750:FF:000001">
    <property type="entry name" value="Phosphate acetyltransferase"/>
    <property type="match status" value="1"/>
</dbReference>
<dbReference type="Gene3D" id="3.40.50.10950">
    <property type="match status" value="1"/>
</dbReference>
<dbReference type="Gene3D" id="3.40.1390.20">
    <property type="entry name" value="HprK N-terminal domain-like"/>
    <property type="match status" value="1"/>
</dbReference>
<dbReference type="Gene3D" id="3.40.50.10750">
    <property type="entry name" value="Isocitrate/Isopropylmalate dehydrogenase-like"/>
    <property type="match status" value="1"/>
</dbReference>
<dbReference type="Gene3D" id="3.40.50.300">
    <property type="entry name" value="P-loop containing nucleotide triphosphate hydrolases"/>
    <property type="match status" value="1"/>
</dbReference>
<dbReference type="InterPro" id="IPR010766">
    <property type="entry name" value="DRTGG"/>
</dbReference>
<dbReference type="InterPro" id="IPR016475">
    <property type="entry name" value="P-Actrans_bac"/>
</dbReference>
<dbReference type="InterPro" id="IPR027417">
    <property type="entry name" value="P-loop_NTPase"/>
</dbReference>
<dbReference type="InterPro" id="IPR004614">
    <property type="entry name" value="P_AcTrfase"/>
</dbReference>
<dbReference type="InterPro" id="IPR042113">
    <property type="entry name" value="P_AcTrfase_dom1"/>
</dbReference>
<dbReference type="InterPro" id="IPR042112">
    <property type="entry name" value="P_AcTrfase_dom2"/>
</dbReference>
<dbReference type="InterPro" id="IPR050500">
    <property type="entry name" value="Phos_Acetyltrans/Butyryltrans"/>
</dbReference>
<dbReference type="InterPro" id="IPR002505">
    <property type="entry name" value="PTA_PTB"/>
</dbReference>
<dbReference type="InterPro" id="IPR028979">
    <property type="entry name" value="Ser_kin/Pase_Hpr-like_N_sf"/>
</dbReference>
<dbReference type="NCBIfam" id="NF004167">
    <property type="entry name" value="PRK05632.1"/>
    <property type="match status" value="1"/>
</dbReference>
<dbReference type="NCBIfam" id="NF007233">
    <property type="entry name" value="PRK09653.1"/>
    <property type="match status" value="1"/>
</dbReference>
<dbReference type="NCBIfam" id="TIGR00651">
    <property type="entry name" value="pta"/>
    <property type="match status" value="1"/>
</dbReference>
<dbReference type="PANTHER" id="PTHR43356">
    <property type="entry name" value="PHOSPHATE ACETYLTRANSFERASE"/>
    <property type="match status" value="1"/>
</dbReference>
<dbReference type="PANTHER" id="PTHR43356:SF3">
    <property type="entry name" value="PHOSPHATE ACETYLTRANSFERASE"/>
    <property type="match status" value="1"/>
</dbReference>
<dbReference type="Pfam" id="PF13500">
    <property type="entry name" value="AAA_26"/>
    <property type="match status" value="1"/>
</dbReference>
<dbReference type="Pfam" id="PF07085">
    <property type="entry name" value="DRTGG"/>
    <property type="match status" value="1"/>
</dbReference>
<dbReference type="Pfam" id="PF01515">
    <property type="entry name" value="PTA_PTB"/>
    <property type="match status" value="1"/>
</dbReference>
<dbReference type="PIRSF" id="PIRSF006107">
    <property type="entry name" value="PhpActrans_proteobac"/>
    <property type="match status" value="1"/>
</dbReference>
<dbReference type="SUPFAM" id="SSF75138">
    <property type="entry name" value="HprK N-terminal domain-like"/>
    <property type="match status" value="1"/>
</dbReference>
<dbReference type="SUPFAM" id="SSF53659">
    <property type="entry name" value="Isocitrate/Isopropylmalate dehydrogenase-like"/>
    <property type="match status" value="1"/>
</dbReference>
<dbReference type="SUPFAM" id="SSF52540">
    <property type="entry name" value="P-loop containing nucleoside triphosphate hydrolases"/>
    <property type="match status" value="1"/>
</dbReference>
<protein>
    <recommendedName>
        <fullName>Phosphate acetyltransferase</fullName>
        <ecNumber>2.3.1.8</ecNumber>
    </recommendedName>
    <alternativeName>
        <fullName>Phosphotransacetylase</fullName>
    </alternativeName>
</protein>
<evidence type="ECO:0000250" key="1"/>
<evidence type="ECO:0000305" key="2"/>
<sequence>MSNNLYITATESKSGKSAVVLGMMQLLLRDVRKVAFFRPIINQASTDVRDHDINLILRHFGLDIAYEDTYAYSLQDARELINNGQHATLLDNILKKYKKLEDAYDFVLCEGTDFLGKDAAFEFELNADIAANLGCPVMVVANGQQKAARELIASTQLTIDLLDEKGLDVVTAVINRATVTEAEREEIIKSLECKVNCSNPLAVYVLPEESTLGKPTMNDVKKWLGAQVLYGHGRLDTLVDDYIIAAMQIGNFLDYVSQGCLVITPGDRSDIILSSLASRLSTAYPDISGLLLTGGLEPAANVHRLIEGWTGVPIPILSVKDHTYKTIQTLNELYGKIEPDNDRKINTALALFERHIDSSELGSRLINRKSSRITPKMFEFNLIEKAKRNRMRIVLPEGAEERILRAADILVRREVADIILLGDANTVGSRIGDLGLDMDGVQIVQPNLSPKFDEYVAAYHECRKKKGISMEQARDMMNDPTYFGTMMVHKGDADGMVSGAINTTAHTIRPAFEFIKTKPGVSIVSSVFLMCLKDRVLVFGDCAVNPNPTAEQLAEIAISASHTARIFGVDPRVAMLSYSTGSSGKGADVEKVIEATRIAKERAPELLLEGPLQYDAAIDMDVARTKLPGSTVAGQATVFIFPDLNTGNNTYKAVQRAAGAVAIGPVLQGLNKPVNDLSRGCTVADIVNTVAITAIQAQAEKGLI</sequence>
<accession>Q726S7</accession>
<proteinExistence type="inferred from homology"/>
<gene>
    <name type="primary">pta</name>
    <name type="ordered locus">DVU_3029</name>
</gene>
<name>PTA_NITV2</name>
<keyword id="KW-0012">Acyltransferase</keyword>
<keyword id="KW-0963">Cytoplasm</keyword>
<keyword id="KW-1185">Reference proteome</keyword>
<keyword id="KW-0808">Transferase</keyword>
<organism>
    <name type="scientific">Nitratidesulfovibrio vulgaris (strain ATCC 29579 / DSM 644 / CCUG 34227 / NCIMB 8303 / VKM B-1760 / Hildenborough)</name>
    <name type="common">Desulfovibrio vulgaris</name>
    <dbReference type="NCBI Taxonomy" id="882"/>
    <lineage>
        <taxon>Bacteria</taxon>
        <taxon>Pseudomonadati</taxon>
        <taxon>Thermodesulfobacteriota</taxon>
        <taxon>Desulfovibrionia</taxon>
        <taxon>Desulfovibrionales</taxon>
        <taxon>Desulfovibrionaceae</taxon>
        <taxon>Nitratidesulfovibrio</taxon>
    </lineage>
</organism>